<protein>
    <recommendedName>
        <fullName>Uncharacterized protein YMR252C</fullName>
    </recommendedName>
</protein>
<dbReference type="EMBL" id="Z48639">
    <property type="protein sequence ID" value="CAA88579.1"/>
    <property type="molecule type" value="Genomic_DNA"/>
</dbReference>
<dbReference type="EMBL" id="AY558123">
    <property type="protein sequence ID" value="AAS56449.1"/>
    <property type="molecule type" value="Genomic_DNA"/>
</dbReference>
<dbReference type="EMBL" id="BK006946">
    <property type="protein sequence ID" value="DAA10153.1"/>
    <property type="molecule type" value="Genomic_DNA"/>
</dbReference>
<dbReference type="PIR" id="S53074">
    <property type="entry name" value="S53074"/>
</dbReference>
<dbReference type="BioGRID" id="35431">
    <property type="interactions" value="17"/>
</dbReference>
<dbReference type="FunCoup" id="Q04814">
    <property type="interactions" value="8"/>
</dbReference>
<dbReference type="PaxDb" id="4932-YMR252C"/>
<dbReference type="PeptideAtlas" id="Q04814"/>
<dbReference type="EnsemblFungi" id="YMR252C_mRNA">
    <property type="protein sequence ID" value="YMR252C"/>
    <property type="gene ID" value="YMR252C"/>
</dbReference>
<dbReference type="KEGG" id="sce:YMR252C"/>
<dbReference type="AGR" id="SGD:S000004865"/>
<dbReference type="SGD" id="S000004865">
    <property type="gene designation" value="YMR252C"/>
</dbReference>
<dbReference type="VEuPathDB" id="FungiDB:YMR252C"/>
<dbReference type="eggNOG" id="ENOG502S76G">
    <property type="taxonomic scope" value="Eukaryota"/>
</dbReference>
<dbReference type="HOGENOM" id="CLU_159429_1_0_1"/>
<dbReference type="InParanoid" id="Q04814"/>
<dbReference type="OMA" id="GRFGHES"/>
<dbReference type="OrthoDB" id="3972963at2759"/>
<dbReference type="BioCyc" id="YEAST:G3O-32929-MONOMER"/>
<dbReference type="BioGRID-ORCS" id="855294">
    <property type="hits" value="1 hit in 10 CRISPR screens"/>
</dbReference>
<dbReference type="PRO" id="PR:Q04814"/>
<dbReference type="Proteomes" id="UP000002311">
    <property type="component" value="Chromosome XIII"/>
</dbReference>
<dbReference type="RNAct" id="Q04814">
    <property type="molecule type" value="protein"/>
</dbReference>
<dbReference type="GO" id="GO:0005739">
    <property type="term" value="C:mitochondrion"/>
    <property type="evidence" value="ECO:0007005"/>
    <property type="project" value="SGD"/>
</dbReference>
<feature type="chain" id="PRO_0000203339" description="Uncharacterized protein YMR252C">
    <location>
        <begin position="1"/>
        <end position="134"/>
    </location>
</feature>
<gene>
    <name type="ordered locus">YMR252C</name>
    <name type="ORF">YM9920.06C</name>
</gene>
<organism>
    <name type="scientific">Saccharomyces cerevisiae (strain ATCC 204508 / S288c)</name>
    <name type="common">Baker's yeast</name>
    <dbReference type="NCBI Taxonomy" id="559292"/>
    <lineage>
        <taxon>Eukaryota</taxon>
        <taxon>Fungi</taxon>
        <taxon>Dikarya</taxon>
        <taxon>Ascomycota</taxon>
        <taxon>Saccharomycotina</taxon>
        <taxon>Saccharomycetes</taxon>
        <taxon>Saccharomycetales</taxon>
        <taxon>Saccharomycetaceae</taxon>
        <taxon>Saccharomyces</taxon>
    </lineage>
</organism>
<accession>Q04814</accession>
<accession>D6W079</accession>
<comment type="miscellaneous">
    <text evidence="1">Present with 172 molecules/cell in log phase SD medium.</text>
</comment>
<keyword id="KW-1185">Reference proteome</keyword>
<proteinExistence type="evidence at protein level"/>
<reference key="1">
    <citation type="journal article" date="1997" name="Nature">
        <title>The nucleotide sequence of Saccharomyces cerevisiae chromosome XIII.</title>
        <authorList>
            <person name="Bowman S."/>
            <person name="Churcher C.M."/>
            <person name="Badcock K."/>
            <person name="Brown D."/>
            <person name="Chillingworth T."/>
            <person name="Connor R."/>
            <person name="Dedman K."/>
            <person name="Devlin K."/>
            <person name="Gentles S."/>
            <person name="Hamlin N."/>
            <person name="Hunt S."/>
            <person name="Jagels K."/>
            <person name="Lye G."/>
            <person name="Moule S."/>
            <person name="Odell C."/>
            <person name="Pearson D."/>
            <person name="Rajandream M.A."/>
            <person name="Rice P."/>
            <person name="Skelton J."/>
            <person name="Walsh S.V."/>
            <person name="Whitehead S."/>
            <person name="Barrell B.G."/>
        </authorList>
    </citation>
    <scope>NUCLEOTIDE SEQUENCE [LARGE SCALE GENOMIC DNA]</scope>
    <source>
        <strain>ATCC 204508 / S288c</strain>
    </source>
</reference>
<reference key="2">
    <citation type="journal article" date="2014" name="G3 (Bethesda)">
        <title>The reference genome sequence of Saccharomyces cerevisiae: Then and now.</title>
        <authorList>
            <person name="Engel S.R."/>
            <person name="Dietrich F.S."/>
            <person name="Fisk D.G."/>
            <person name="Binkley G."/>
            <person name="Balakrishnan R."/>
            <person name="Costanzo M.C."/>
            <person name="Dwight S.S."/>
            <person name="Hitz B.C."/>
            <person name="Karra K."/>
            <person name="Nash R.S."/>
            <person name="Weng S."/>
            <person name="Wong E.D."/>
            <person name="Lloyd P."/>
            <person name="Skrzypek M.S."/>
            <person name="Miyasato S.R."/>
            <person name="Simison M."/>
            <person name="Cherry J.M."/>
        </authorList>
    </citation>
    <scope>GENOME REANNOTATION</scope>
    <source>
        <strain>ATCC 204508 / S288c</strain>
    </source>
</reference>
<reference key="3">
    <citation type="journal article" date="2007" name="Genome Res.">
        <title>Approaching a complete repository of sequence-verified protein-encoding clones for Saccharomyces cerevisiae.</title>
        <authorList>
            <person name="Hu Y."/>
            <person name="Rolfs A."/>
            <person name="Bhullar B."/>
            <person name="Murthy T.V.S."/>
            <person name="Zhu C."/>
            <person name="Berger M.F."/>
            <person name="Camargo A.A."/>
            <person name="Kelley F."/>
            <person name="McCarron S."/>
            <person name="Jepson D."/>
            <person name="Richardson A."/>
            <person name="Raphael J."/>
            <person name="Moreira D."/>
            <person name="Taycher E."/>
            <person name="Zuo D."/>
            <person name="Mohr S."/>
            <person name="Kane M.F."/>
            <person name="Williamson J."/>
            <person name="Simpson A.J.G."/>
            <person name="Bulyk M.L."/>
            <person name="Harlow E."/>
            <person name="Marsischky G."/>
            <person name="Kolodner R.D."/>
            <person name="LaBaer J."/>
        </authorList>
    </citation>
    <scope>NUCLEOTIDE SEQUENCE [GENOMIC DNA]</scope>
    <source>
        <strain>ATCC 204508 / S288c</strain>
    </source>
</reference>
<reference key="4">
    <citation type="journal article" date="2003" name="Nature">
        <title>Global analysis of protein expression in yeast.</title>
        <authorList>
            <person name="Ghaemmaghami S."/>
            <person name="Huh W.-K."/>
            <person name="Bower K."/>
            <person name="Howson R.W."/>
            <person name="Belle A."/>
            <person name="Dephoure N."/>
            <person name="O'Shea E.K."/>
            <person name="Weissman J.S."/>
        </authorList>
    </citation>
    <scope>LEVEL OF PROTEIN EXPRESSION [LARGE SCALE ANALYSIS]</scope>
</reference>
<sequence length="134" mass="15635">MFGKVFVSYIRTRIGFKPLSTIYTPVSSSSLSFDKEACFPFKKWHELNMSQKQEFIQRFVKNYRHQYPSSKTNVSLKGLSIGMDEHNDSPSVFGIFYNDIWKSFKNEQLGTNNDNMKSGSRFSHPSFKQLLIQK</sequence>
<evidence type="ECO:0000269" key="1">
    <source>
    </source>
</evidence>
<name>YM86_YEAST</name>